<evidence type="ECO:0000250" key="1"/>
<evidence type="ECO:0000255" key="2">
    <source>
        <dbReference type="PROSITE-ProRule" id="PRU00169"/>
    </source>
</evidence>
<evidence type="ECO:0000255" key="3">
    <source>
        <dbReference type="PROSITE-ProRule" id="PRU01091"/>
    </source>
</evidence>
<evidence type="ECO:0000305" key="4"/>
<sequence length="243" mass="27491">MENQKEKILVVDDEASIRRILETRLTIIGYEVITASNGEEALLVFRKEYPSLVVLDVMMPKLDGYGVCQELRKESDVPIIMLTALGEVCDRITGLEIGADDYVVKPFSPKELEARIRSVLRRADKITTSLGVPNSGIISIGFLKIDTNKRQVYKNNERVRLTGMEFSLLELLVSKAGEPFSRASILQEVWGYTPERHVDTRVVDVHISRLRAKLEDDPSNPDLILTARGTGYLFQRIIEMNKL</sequence>
<keyword id="KW-0150">Chloroplast</keyword>
<keyword id="KW-0238">DNA-binding</keyword>
<keyword id="KW-0597">Phosphoprotein</keyword>
<keyword id="KW-0934">Plastid</keyword>
<keyword id="KW-0804">Transcription</keyword>
<keyword id="KW-0805">Transcription regulation</keyword>
<keyword id="KW-0902">Two-component regulatory system</keyword>
<comment type="function">
    <text>Probable promoter-specific protein mediating the interaction between DNA and RNA polymerase.</text>
</comment>
<comment type="subcellular location">
    <subcellularLocation>
        <location>Plastid</location>
        <location>Chloroplast</location>
    </subcellularLocation>
</comment>
<comment type="sequence caution" evidence="4">
    <conflict type="erroneous initiation">
        <sequence resource="EMBL-CDS" id="BAE92482"/>
    </conflict>
</comment>
<protein>
    <recommendedName>
        <fullName>Probable transcriptional regulator ycf27</fullName>
    </recommendedName>
    <alternativeName>
        <fullName>OmpR-like protein</fullName>
    </alternativeName>
</protein>
<geneLocation type="chloroplast"/>
<gene>
    <name type="primary">ycf27</name>
</gene>
<feature type="chain" id="PRO_0000277347" description="Probable transcriptional regulator ycf27">
    <location>
        <begin position="1"/>
        <end position="243"/>
    </location>
</feature>
<feature type="domain" description="Response regulatory" evidence="2">
    <location>
        <begin position="7"/>
        <end position="120"/>
    </location>
</feature>
<feature type="DNA-binding region" description="H-T-H motif" evidence="1">
    <location>
        <begin position="76"/>
        <end position="94"/>
    </location>
</feature>
<feature type="DNA-binding region" description="OmpR/PhoB-type" evidence="3">
    <location>
        <begin position="135"/>
        <end position="236"/>
    </location>
</feature>
<feature type="modified residue" description="4-aspartylphosphate" evidence="2">
    <location>
        <position position="56"/>
    </location>
</feature>
<dbReference type="EMBL" id="AP006715">
    <property type="protein sequence ID" value="BAE92482.1"/>
    <property type="status" value="ALT_INIT"/>
    <property type="molecule type" value="Genomic_DNA"/>
</dbReference>
<dbReference type="SMR" id="Q1XDC9"/>
<dbReference type="GO" id="GO:0009507">
    <property type="term" value="C:chloroplast"/>
    <property type="evidence" value="ECO:0007669"/>
    <property type="project" value="UniProtKB-SubCell"/>
</dbReference>
<dbReference type="GO" id="GO:0005829">
    <property type="term" value="C:cytosol"/>
    <property type="evidence" value="ECO:0007669"/>
    <property type="project" value="TreeGrafter"/>
</dbReference>
<dbReference type="GO" id="GO:0032993">
    <property type="term" value="C:protein-DNA complex"/>
    <property type="evidence" value="ECO:0007669"/>
    <property type="project" value="TreeGrafter"/>
</dbReference>
<dbReference type="GO" id="GO:0000156">
    <property type="term" value="F:phosphorelay response regulator activity"/>
    <property type="evidence" value="ECO:0007669"/>
    <property type="project" value="TreeGrafter"/>
</dbReference>
<dbReference type="GO" id="GO:0000976">
    <property type="term" value="F:transcription cis-regulatory region binding"/>
    <property type="evidence" value="ECO:0007669"/>
    <property type="project" value="TreeGrafter"/>
</dbReference>
<dbReference type="GO" id="GO:0006355">
    <property type="term" value="P:regulation of DNA-templated transcription"/>
    <property type="evidence" value="ECO:0007669"/>
    <property type="project" value="InterPro"/>
</dbReference>
<dbReference type="CDD" id="cd17574">
    <property type="entry name" value="REC_OmpR"/>
    <property type="match status" value="1"/>
</dbReference>
<dbReference type="CDD" id="cd00383">
    <property type="entry name" value="trans_reg_C"/>
    <property type="match status" value="1"/>
</dbReference>
<dbReference type="FunFam" id="3.40.50.2300:FF:000001">
    <property type="entry name" value="DNA-binding response regulator PhoB"/>
    <property type="match status" value="1"/>
</dbReference>
<dbReference type="Gene3D" id="3.40.50.2300">
    <property type="match status" value="1"/>
</dbReference>
<dbReference type="Gene3D" id="6.10.250.690">
    <property type="match status" value="1"/>
</dbReference>
<dbReference type="Gene3D" id="1.10.10.10">
    <property type="entry name" value="Winged helix-like DNA-binding domain superfamily/Winged helix DNA-binding domain"/>
    <property type="match status" value="1"/>
</dbReference>
<dbReference type="InterPro" id="IPR011006">
    <property type="entry name" value="CheY-like_superfamily"/>
</dbReference>
<dbReference type="InterPro" id="IPR001867">
    <property type="entry name" value="OmpR/PhoB-type_DNA-bd"/>
</dbReference>
<dbReference type="InterPro" id="IPR016032">
    <property type="entry name" value="Sig_transdc_resp-reg_C-effctor"/>
</dbReference>
<dbReference type="InterPro" id="IPR001789">
    <property type="entry name" value="Sig_transdc_resp-reg_receiver"/>
</dbReference>
<dbReference type="InterPro" id="IPR039420">
    <property type="entry name" value="WalR-like"/>
</dbReference>
<dbReference type="InterPro" id="IPR036388">
    <property type="entry name" value="WH-like_DNA-bd_sf"/>
</dbReference>
<dbReference type="NCBIfam" id="NF045944">
    <property type="entry name" value="ResRegRpaBCyano"/>
    <property type="match status" value="1"/>
</dbReference>
<dbReference type="PANTHER" id="PTHR48111:SF65">
    <property type="entry name" value="OMPR SUBFAMILY"/>
    <property type="match status" value="1"/>
</dbReference>
<dbReference type="PANTHER" id="PTHR48111">
    <property type="entry name" value="REGULATOR OF RPOS"/>
    <property type="match status" value="1"/>
</dbReference>
<dbReference type="Pfam" id="PF00072">
    <property type="entry name" value="Response_reg"/>
    <property type="match status" value="1"/>
</dbReference>
<dbReference type="Pfam" id="PF00486">
    <property type="entry name" value="Trans_reg_C"/>
    <property type="match status" value="1"/>
</dbReference>
<dbReference type="SMART" id="SM00448">
    <property type="entry name" value="REC"/>
    <property type="match status" value="1"/>
</dbReference>
<dbReference type="SMART" id="SM00862">
    <property type="entry name" value="Trans_reg_C"/>
    <property type="match status" value="1"/>
</dbReference>
<dbReference type="SUPFAM" id="SSF46894">
    <property type="entry name" value="C-terminal effector domain of the bipartite response regulators"/>
    <property type="match status" value="1"/>
</dbReference>
<dbReference type="SUPFAM" id="SSF52172">
    <property type="entry name" value="CheY-like"/>
    <property type="match status" value="1"/>
</dbReference>
<dbReference type="PROSITE" id="PS51755">
    <property type="entry name" value="OMPR_PHOB"/>
    <property type="match status" value="1"/>
</dbReference>
<dbReference type="PROSITE" id="PS50110">
    <property type="entry name" value="RESPONSE_REGULATORY"/>
    <property type="match status" value="1"/>
</dbReference>
<proteinExistence type="inferred from homology"/>
<organism>
    <name type="scientific">Pyropia yezoensis</name>
    <name type="common">Susabi-nori</name>
    <name type="synonym">Porphyra yezoensis</name>
    <dbReference type="NCBI Taxonomy" id="2788"/>
    <lineage>
        <taxon>Eukaryota</taxon>
        <taxon>Rhodophyta</taxon>
        <taxon>Bangiophyceae</taxon>
        <taxon>Bangiales</taxon>
        <taxon>Bangiaceae</taxon>
        <taxon>Pyropia</taxon>
    </lineage>
</organism>
<reference key="1">
    <citation type="submission" date="2003-11" db="EMBL/GenBank/DDBJ databases">
        <title>Whole genome sequence of Porphyra yezoensis chloroplast.</title>
        <authorList>
            <person name="Kunimoto M."/>
            <person name="Morishima K."/>
            <person name="Yoshikawa M."/>
            <person name="Fukuda S."/>
            <person name="Kobayashi T."/>
            <person name="Kobayashi M."/>
            <person name="Okazaki T."/>
            <person name="Ohara I."/>
            <person name="Nakayama I."/>
        </authorList>
    </citation>
    <scope>NUCLEOTIDE SEQUENCE [LARGE SCALE GENOMIC DNA]</scope>
    <source>
        <strain>U-51</strain>
    </source>
</reference>
<name>YCF27_PYRYE</name>
<accession>Q1XDC9</accession>